<proteinExistence type="inferred from homology"/>
<feature type="chain" id="PRO_1000087490" description="tRNA N6-adenosine threonylcarbamoyltransferase">
    <location>
        <begin position="1"/>
        <end position="338"/>
    </location>
</feature>
<feature type="binding site" evidence="1">
    <location>
        <position position="111"/>
    </location>
    <ligand>
        <name>Fe cation</name>
        <dbReference type="ChEBI" id="CHEBI:24875"/>
    </ligand>
</feature>
<feature type="binding site" evidence="1">
    <location>
        <position position="115"/>
    </location>
    <ligand>
        <name>Fe cation</name>
        <dbReference type="ChEBI" id="CHEBI:24875"/>
    </ligand>
</feature>
<feature type="binding site" evidence="1">
    <location>
        <begin position="134"/>
        <end position="138"/>
    </location>
    <ligand>
        <name>substrate</name>
    </ligand>
</feature>
<feature type="binding site" evidence="1">
    <location>
        <position position="167"/>
    </location>
    <ligand>
        <name>substrate</name>
    </ligand>
</feature>
<feature type="binding site" evidence="1">
    <location>
        <position position="180"/>
    </location>
    <ligand>
        <name>substrate</name>
    </ligand>
</feature>
<feature type="binding site" evidence="1">
    <location>
        <position position="272"/>
    </location>
    <ligand>
        <name>substrate</name>
    </ligand>
</feature>
<feature type="binding site" evidence="1">
    <location>
        <position position="300"/>
    </location>
    <ligand>
        <name>Fe cation</name>
        <dbReference type="ChEBI" id="CHEBI:24875"/>
    </ligand>
</feature>
<name>TSAD_SHEPA</name>
<protein>
    <recommendedName>
        <fullName evidence="1">tRNA N6-adenosine threonylcarbamoyltransferase</fullName>
        <ecNumber evidence="1">2.3.1.234</ecNumber>
    </recommendedName>
    <alternativeName>
        <fullName evidence="1">N6-L-threonylcarbamoyladenine synthase</fullName>
        <shortName evidence="1">t(6)A synthase</shortName>
    </alternativeName>
    <alternativeName>
        <fullName evidence="1">t(6)A37 threonylcarbamoyladenosine biosynthesis protein TsaD</fullName>
    </alternativeName>
    <alternativeName>
        <fullName evidence="1">tRNA threonylcarbamoyladenosine biosynthesis protein TsaD</fullName>
    </alternativeName>
</protein>
<organism>
    <name type="scientific">Shewanella pealeana (strain ATCC 700345 / ANG-SQ1)</name>
    <dbReference type="NCBI Taxonomy" id="398579"/>
    <lineage>
        <taxon>Bacteria</taxon>
        <taxon>Pseudomonadati</taxon>
        <taxon>Pseudomonadota</taxon>
        <taxon>Gammaproteobacteria</taxon>
        <taxon>Alteromonadales</taxon>
        <taxon>Shewanellaceae</taxon>
        <taxon>Shewanella</taxon>
    </lineage>
</organism>
<gene>
    <name evidence="1" type="primary">tsaD</name>
    <name type="synonym">gcp</name>
    <name type="ordered locus">Spea_0962</name>
</gene>
<reference key="1">
    <citation type="submission" date="2007-10" db="EMBL/GenBank/DDBJ databases">
        <title>Complete sequence of Shewanella pealeana ATCC 700345.</title>
        <authorList>
            <consortium name="US DOE Joint Genome Institute"/>
            <person name="Copeland A."/>
            <person name="Lucas S."/>
            <person name="Lapidus A."/>
            <person name="Barry K."/>
            <person name="Glavina del Rio T."/>
            <person name="Dalin E."/>
            <person name="Tice H."/>
            <person name="Pitluck S."/>
            <person name="Chertkov O."/>
            <person name="Brettin T."/>
            <person name="Bruce D."/>
            <person name="Detter J.C."/>
            <person name="Han C."/>
            <person name="Schmutz J."/>
            <person name="Larimer F."/>
            <person name="Land M."/>
            <person name="Hauser L."/>
            <person name="Kyrpides N."/>
            <person name="Kim E."/>
            <person name="Zhao J.-S.Z."/>
            <person name="Manno D."/>
            <person name="Hawari J."/>
            <person name="Richardson P."/>
        </authorList>
    </citation>
    <scope>NUCLEOTIDE SEQUENCE [LARGE SCALE GENOMIC DNA]</scope>
    <source>
        <strain>ATCC 700345 / ANG-SQ1</strain>
    </source>
</reference>
<sequence length="338" mass="36045">MRVLGIETSCDETGIAVYDDKKGLLSHALYSQVKLHADYGGVVPELASRDHVRKIVPLIRQALADAGMTIEDIDGIAYTKGPGLIGALLVGACVGRALAFSWDKPAIGVHHMEGHLLAPMLEDDVPEFPFLALLVSGGHSMIVGVEGIGRYTVLGESVDDAAGEAFDKTAKLMGLDYPGGPRLSKLAAKGVPNSYRFPRPMTDKPGLNMSFSGLKTFAANTIAAEPKDEQTRANIACAFEEAVVDTLAIKCKRALKQTGYKNLVIAGGVSANTRLRSSLAEMMQGLGGKVYYPRGEFCTDNGAMIAYAGLQRLKAGQVEGLEVKGQPRWPLDTLEPVD</sequence>
<comment type="function">
    <text evidence="1">Required for the formation of a threonylcarbamoyl group on adenosine at position 37 (t(6)A37) in tRNAs that read codons beginning with adenine. Is involved in the transfer of the threonylcarbamoyl moiety of threonylcarbamoyl-AMP (TC-AMP) to the N6 group of A37, together with TsaE and TsaB. TsaD likely plays a direct catalytic role in this reaction.</text>
</comment>
<comment type="catalytic activity">
    <reaction evidence="1">
        <text>L-threonylcarbamoyladenylate + adenosine(37) in tRNA = N(6)-L-threonylcarbamoyladenosine(37) in tRNA + AMP + H(+)</text>
        <dbReference type="Rhea" id="RHEA:37059"/>
        <dbReference type="Rhea" id="RHEA-COMP:10162"/>
        <dbReference type="Rhea" id="RHEA-COMP:10163"/>
        <dbReference type="ChEBI" id="CHEBI:15378"/>
        <dbReference type="ChEBI" id="CHEBI:73682"/>
        <dbReference type="ChEBI" id="CHEBI:74411"/>
        <dbReference type="ChEBI" id="CHEBI:74418"/>
        <dbReference type="ChEBI" id="CHEBI:456215"/>
        <dbReference type="EC" id="2.3.1.234"/>
    </reaction>
</comment>
<comment type="cofactor">
    <cofactor evidence="1">
        <name>Fe(2+)</name>
        <dbReference type="ChEBI" id="CHEBI:29033"/>
    </cofactor>
    <text evidence="1">Binds 1 Fe(2+) ion per subunit.</text>
</comment>
<comment type="subcellular location">
    <subcellularLocation>
        <location evidence="1">Cytoplasm</location>
    </subcellularLocation>
</comment>
<comment type="similarity">
    <text evidence="1">Belongs to the KAE1 / TsaD family.</text>
</comment>
<evidence type="ECO:0000255" key="1">
    <source>
        <dbReference type="HAMAP-Rule" id="MF_01445"/>
    </source>
</evidence>
<dbReference type="EC" id="2.3.1.234" evidence="1"/>
<dbReference type="EMBL" id="CP000851">
    <property type="protein sequence ID" value="ABV86289.1"/>
    <property type="molecule type" value="Genomic_DNA"/>
</dbReference>
<dbReference type="RefSeq" id="WP_012154222.1">
    <property type="nucleotide sequence ID" value="NC_009901.1"/>
</dbReference>
<dbReference type="SMR" id="A8H152"/>
<dbReference type="STRING" id="398579.Spea_0962"/>
<dbReference type="KEGG" id="spl:Spea_0962"/>
<dbReference type="eggNOG" id="COG0533">
    <property type="taxonomic scope" value="Bacteria"/>
</dbReference>
<dbReference type="HOGENOM" id="CLU_023208_0_0_6"/>
<dbReference type="OrthoDB" id="9806197at2"/>
<dbReference type="Proteomes" id="UP000002608">
    <property type="component" value="Chromosome"/>
</dbReference>
<dbReference type="GO" id="GO:0005737">
    <property type="term" value="C:cytoplasm"/>
    <property type="evidence" value="ECO:0007669"/>
    <property type="project" value="UniProtKB-SubCell"/>
</dbReference>
<dbReference type="GO" id="GO:0005506">
    <property type="term" value="F:iron ion binding"/>
    <property type="evidence" value="ECO:0007669"/>
    <property type="project" value="UniProtKB-UniRule"/>
</dbReference>
<dbReference type="GO" id="GO:0061711">
    <property type="term" value="F:N(6)-L-threonylcarbamoyladenine synthase activity"/>
    <property type="evidence" value="ECO:0007669"/>
    <property type="project" value="UniProtKB-EC"/>
</dbReference>
<dbReference type="GO" id="GO:0002949">
    <property type="term" value="P:tRNA threonylcarbamoyladenosine modification"/>
    <property type="evidence" value="ECO:0007669"/>
    <property type="project" value="UniProtKB-UniRule"/>
</dbReference>
<dbReference type="CDD" id="cd24133">
    <property type="entry name" value="ASKHA_NBD_TsaD_bac"/>
    <property type="match status" value="1"/>
</dbReference>
<dbReference type="FunFam" id="3.30.420.40:FF:000031">
    <property type="entry name" value="tRNA N6-adenosine threonylcarbamoyltransferase"/>
    <property type="match status" value="1"/>
</dbReference>
<dbReference type="Gene3D" id="3.30.420.40">
    <property type="match status" value="2"/>
</dbReference>
<dbReference type="HAMAP" id="MF_01445">
    <property type="entry name" value="TsaD"/>
    <property type="match status" value="1"/>
</dbReference>
<dbReference type="InterPro" id="IPR043129">
    <property type="entry name" value="ATPase_NBD"/>
</dbReference>
<dbReference type="InterPro" id="IPR000905">
    <property type="entry name" value="Gcp-like_dom"/>
</dbReference>
<dbReference type="InterPro" id="IPR017861">
    <property type="entry name" value="KAE1/TsaD"/>
</dbReference>
<dbReference type="InterPro" id="IPR017860">
    <property type="entry name" value="Peptidase_M22_CS"/>
</dbReference>
<dbReference type="InterPro" id="IPR022450">
    <property type="entry name" value="TsaD"/>
</dbReference>
<dbReference type="NCBIfam" id="TIGR00329">
    <property type="entry name" value="gcp_kae1"/>
    <property type="match status" value="1"/>
</dbReference>
<dbReference type="NCBIfam" id="TIGR03723">
    <property type="entry name" value="T6A_TsaD_YgjD"/>
    <property type="match status" value="1"/>
</dbReference>
<dbReference type="PANTHER" id="PTHR11735">
    <property type="entry name" value="TRNA N6-ADENOSINE THREONYLCARBAMOYLTRANSFERASE"/>
    <property type="match status" value="1"/>
</dbReference>
<dbReference type="PANTHER" id="PTHR11735:SF6">
    <property type="entry name" value="TRNA N6-ADENOSINE THREONYLCARBAMOYLTRANSFERASE, MITOCHONDRIAL"/>
    <property type="match status" value="1"/>
</dbReference>
<dbReference type="Pfam" id="PF00814">
    <property type="entry name" value="TsaD"/>
    <property type="match status" value="1"/>
</dbReference>
<dbReference type="PRINTS" id="PR00789">
    <property type="entry name" value="OSIALOPTASE"/>
</dbReference>
<dbReference type="SUPFAM" id="SSF53067">
    <property type="entry name" value="Actin-like ATPase domain"/>
    <property type="match status" value="2"/>
</dbReference>
<dbReference type="PROSITE" id="PS01016">
    <property type="entry name" value="GLYCOPROTEASE"/>
    <property type="match status" value="1"/>
</dbReference>
<accession>A8H152</accession>
<keyword id="KW-0012">Acyltransferase</keyword>
<keyword id="KW-0963">Cytoplasm</keyword>
<keyword id="KW-0408">Iron</keyword>
<keyword id="KW-0479">Metal-binding</keyword>
<keyword id="KW-1185">Reference proteome</keyword>
<keyword id="KW-0808">Transferase</keyword>
<keyword id="KW-0819">tRNA processing</keyword>